<sequence>MRFRVTPYHGNLLGDHERLAAFREAISSRARGLTYDLGAGSGILSFFASEYADRVIAIERDPKIAACAGENLSGLDNVSVVNEDALHYEFSAADTIICEMLDTALIDEEQVPVLRRALKFLRNDGTVIPQAVFNAAEPVTVNFENIMYDENLSQPSSGPMRVYDRVEFRGNLPEIFRGSLKLQASSPFNAIRIISFTLTAPGIICGPTPMMNPPLIIPLEETGDKGEVEIKLSYRMGGGLDSVEASII</sequence>
<gene>
    <name type="ordered locus">MTH_738</name>
</gene>
<protein>
    <recommendedName>
        <fullName>Uncharacterized protein MTH_738</fullName>
    </recommendedName>
</protein>
<organism>
    <name type="scientific">Methanothermobacter thermautotrophicus (strain ATCC 29096 / DSM 1053 / JCM 10044 / NBRC 100330 / Delta H)</name>
    <name type="common">Methanobacterium thermoautotrophicum</name>
    <dbReference type="NCBI Taxonomy" id="187420"/>
    <lineage>
        <taxon>Archaea</taxon>
        <taxon>Methanobacteriati</taxon>
        <taxon>Methanobacteriota</taxon>
        <taxon>Methanomada group</taxon>
        <taxon>Methanobacteria</taxon>
        <taxon>Methanobacteriales</taxon>
        <taxon>Methanobacteriaceae</taxon>
        <taxon>Methanothermobacter</taxon>
    </lineage>
</organism>
<reference key="1">
    <citation type="journal article" date="1997" name="J. Bacteriol.">
        <title>Complete genome sequence of Methanobacterium thermoautotrophicum deltaH: functional analysis and comparative genomics.</title>
        <authorList>
            <person name="Smith D.R."/>
            <person name="Doucette-Stamm L.A."/>
            <person name="Deloughery C."/>
            <person name="Lee H.-M."/>
            <person name="Dubois J."/>
            <person name="Aldredge T."/>
            <person name="Bashirzadeh R."/>
            <person name="Blakely D."/>
            <person name="Cook R."/>
            <person name="Gilbert K."/>
            <person name="Harrison D."/>
            <person name="Hoang L."/>
            <person name="Keagle P."/>
            <person name="Lumm W."/>
            <person name="Pothier B."/>
            <person name="Qiu D."/>
            <person name="Spadafora R."/>
            <person name="Vicare R."/>
            <person name="Wang Y."/>
            <person name="Wierzbowski J."/>
            <person name="Gibson R."/>
            <person name="Jiwani N."/>
            <person name="Caruso A."/>
            <person name="Bush D."/>
            <person name="Safer H."/>
            <person name="Patwell D."/>
            <person name="Prabhakar S."/>
            <person name="McDougall S."/>
            <person name="Shimer G."/>
            <person name="Goyal A."/>
            <person name="Pietrovski S."/>
            <person name="Church G.M."/>
            <person name="Daniels C.J."/>
            <person name="Mao J.-I."/>
            <person name="Rice P."/>
            <person name="Noelling J."/>
            <person name="Reeve J.N."/>
        </authorList>
    </citation>
    <scope>NUCLEOTIDE SEQUENCE [LARGE SCALE GENOMIC DNA]</scope>
    <source>
        <strain>ATCC 29096 / DSM 1053 / JCM 10044 / NBRC 100330 / Delta H</strain>
    </source>
</reference>
<comment type="similarity">
    <text evidence="1">To M.jannaschii MJ1452.</text>
</comment>
<feature type="chain" id="PRO_0000107341" description="Uncharacterized protein MTH_738">
    <location>
        <begin position="1"/>
        <end position="248"/>
    </location>
</feature>
<evidence type="ECO:0000305" key="1"/>
<proteinExistence type="predicted"/>
<name>Y738_METTH</name>
<keyword id="KW-1185">Reference proteome</keyword>
<dbReference type="EMBL" id="AE000666">
    <property type="protein sequence ID" value="AAB85242.1"/>
    <property type="molecule type" value="Genomic_DNA"/>
</dbReference>
<dbReference type="PIR" id="F69198">
    <property type="entry name" value="F69198"/>
</dbReference>
<dbReference type="RefSeq" id="WP_010876377.1">
    <property type="nucleotide sequence ID" value="NC_000916.1"/>
</dbReference>
<dbReference type="SMR" id="O26833"/>
<dbReference type="FunCoup" id="O26833">
    <property type="interactions" value="3"/>
</dbReference>
<dbReference type="STRING" id="187420.MTH_738"/>
<dbReference type="PaxDb" id="187420-MTH_738"/>
<dbReference type="EnsemblBacteria" id="AAB85242">
    <property type="protein sequence ID" value="AAB85242"/>
    <property type="gene ID" value="MTH_738"/>
</dbReference>
<dbReference type="KEGG" id="mth:MTH_738"/>
<dbReference type="PATRIC" id="fig|187420.15.peg.726"/>
<dbReference type="HOGENOM" id="CLU_1067987_0_0_2"/>
<dbReference type="InParanoid" id="O26833"/>
<dbReference type="Proteomes" id="UP000005223">
    <property type="component" value="Chromosome"/>
</dbReference>
<dbReference type="GO" id="GO:0042054">
    <property type="term" value="F:histone methyltransferase activity"/>
    <property type="evidence" value="ECO:0007669"/>
    <property type="project" value="TreeGrafter"/>
</dbReference>
<dbReference type="GO" id="GO:0016274">
    <property type="term" value="F:protein-arginine N-methyltransferase activity"/>
    <property type="evidence" value="ECO:0007669"/>
    <property type="project" value="InterPro"/>
</dbReference>
<dbReference type="CDD" id="cd02440">
    <property type="entry name" value="AdoMet_MTases"/>
    <property type="match status" value="1"/>
</dbReference>
<dbReference type="Gene3D" id="3.40.50.150">
    <property type="entry name" value="Vaccinia Virus protein VP39"/>
    <property type="match status" value="1"/>
</dbReference>
<dbReference type="InterPro" id="IPR025799">
    <property type="entry name" value="Arg_MeTrfase"/>
</dbReference>
<dbReference type="InterPro" id="IPR041698">
    <property type="entry name" value="Methyltransf_25"/>
</dbReference>
<dbReference type="InterPro" id="IPR029063">
    <property type="entry name" value="SAM-dependent_MTases_sf"/>
</dbReference>
<dbReference type="InterPro" id="IPR021172">
    <property type="entry name" value="UCP006607_RNA_methylase-rel"/>
</dbReference>
<dbReference type="PANTHER" id="PTHR11006">
    <property type="entry name" value="PROTEIN ARGININE N-METHYLTRANSFERASE"/>
    <property type="match status" value="1"/>
</dbReference>
<dbReference type="PANTHER" id="PTHR11006:SF53">
    <property type="entry name" value="PROTEIN ARGININE N-METHYLTRANSFERASE 3"/>
    <property type="match status" value="1"/>
</dbReference>
<dbReference type="Pfam" id="PF13649">
    <property type="entry name" value="Methyltransf_25"/>
    <property type="match status" value="1"/>
</dbReference>
<dbReference type="PIRSF" id="PIRSF006607">
    <property type="entry name" value="RNAmts_UCP006607"/>
    <property type="match status" value="1"/>
</dbReference>
<dbReference type="SUPFAM" id="SSF53335">
    <property type="entry name" value="S-adenosyl-L-methionine-dependent methyltransferases"/>
    <property type="match status" value="1"/>
</dbReference>
<accession>O26833</accession>